<keyword id="KW-0067">ATP-binding</keyword>
<keyword id="KW-0143">Chaperone</keyword>
<keyword id="KW-0963">Cytoplasm</keyword>
<keyword id="KW-0547">Nucleotide-binding</keyword>
<evidence type="ECO:0000255" key="1">
    <source>
        <dbReference type="HAMAP-Rule" id="MF_00249"/>
    </source>
</evidence>
<reference key="1">
    <citation type="journal article" date="2002" name="Science">
        <title>50 million years of genomic stasis in endosymbiotic bacteria.</title>
        <authorList>
            <person name="Tamas I."/>
            <person name="Klasson L."/>
            <person name="Canbaeck B."/>
            <person name="Naeslund A.K."/>
            <person name="Eriksson A.-S."/>
            <person name="Wernegreen J.J."/>
            <person name="Sandstroem J.P."/>
            <person name="Moran N.A."/>
            <person name="Andersson S.G.E."/>
        </authorList>
    </citation>
    <scope>NUCLEOTIDE SEQUENCE [LARGE SCALE GENOMIC DNA]</scope>
    <source>
        <strain>Sg</strain>
    </source>
</reference>
<reference key="2">
    <citation type="submission" date="1998-11" db="EMBL/GenBank/DDBJ databases">
        <title>Buchnera plasmid-associated trpEG probably originated from a chromosomal location between hslU and fpr.</title>
        <authorList>
            <person name="Clark M.A."/>
            <person name="Baumann P."/>
            <person name="Moran M.A."/>
        </authorList>
    </citation>
    <scope>NUCLEOTIDE SEQUENCE [GENOMIC DNA] OF 167-443</scope>
</reference>
<dbReference type="EMBL" id="AE013218">
    <property type="protein sequence ID" value="AAM68096.1"/>
    <property type="molecule type" value="Genomic_DNA"/>
</dbReference>
<dbReference type="EMBL" id="AF108665">
    <property type="protein sequence ID" value="AAD19633.1"/>
    <property type="molecule type" value="Genomic_DNA"/>
</dbReference>
<dbReference type="RefSeq" id="WP_011054062.1">
    <property type="nucleotide sequence ID" value="NC_004061.1"/>
</dbReference>
<dbReference type="SMR" id="Q9Z617"/>
<dbReference type="STRING" id="198804.BUsg_558"/>
<dbReference type="GeneID" id="93004036"/>
<dbReference type="KEGG" id="bas:BUsg_558"/>
<dbReference type="eggNOG" id="COG1220">
    <property type="taxonomic scope" value="Bacteria"/>
</dbReference>
<dbReference type="HOGENOM" id="CLU_033123_0_0_6"/>
<dbReference type="Proteomes" id="UP000000416">
    <property type="component" value="Chromosome"/>
</dbReference>
<dbReference type="GO" id="GO:0009376">
    <property type="term" value="C:HslUV protease complex"/>
    <property type="evidence" value="ECO:0007669"/>
    <property type="project" value="UniProtKB-UniRule"/>
</dbReference>
<dbReference type="GO" id="GO:0005524">
    <property type="term" value="F:ATP binding"/>
    <property type="evidence" value="ECO:0007669"/>
    <property type="project" value="UniProtKB-UniRule"/>
</dbReference>
<dbReference type="GO" id="GO:0016887">
    <property type="term" value="F:ATP hydrolysis activity"/>
    <property type="evidence" value="ECO:0007669"/>
    <property type="project" value="InterPro"/>
</dbReference>
<dbReference type="GO" id="GO:0008233">
    <property type="term" value="F:peptidase activity"/>
    <property type="evidence" value="ECO:0007669"/>
    <property type="project" value="InterPro"/>
</dbReference>
<dbReference type="GO" id="GO:0036402">
    <property type="term" value="F:proteasome-activating activity"/>
    <property type="evidence" value="ECO:0007669"/>
    <property type="project" value="UniProtKB-UniRule"/>
</dbReference>
<dbReference type="GO" id="GO:0043335">
    <property type="term" value="P:protein unfolding"/>
    <property type="evidence" value="ECO:0007669"/>
    <property type="project" value="UniProtKB-UniRule"/>
</dbReference>
<dbReference type="GO" id="GO:0051603">
    <property type="term" value="P:proteolysis involved in protein catabolic process"/>
    <property type="evidence" value="ECO:0007669"/>
    <property type="project" value="TreeGrafter"/>
</dbReference>
<dbReference type="CDD" id="cd19498">
    <property type="entry name" value="RecA-like_HslU"/>
    <property type="match status" value="1"/>
</dbReference>
<dbReference type="FunFam" id="1.10.8.10:FF:000028">
    <property type="entry name" value="ATP-dependent protease ATPase subunit HslU"/>
    <property type="match status" value="1"/>
</dbReference>
<dbReference type="FunFam" id="3.40.50.300:FF:000213">
    <property type="entry name" value="ATP-dependent protease ATPase subunit HslU"/>
    <property type="match status" value="1"/>
</dbReference>
<dbReference type="FunFam" id="3.40.50.300:FF:000220">
    <property type="entry name" value="ATP-dependent protease ATPase subunit HslU"/>
    <property type="match status" value="1"/>
</dbReference>
<dbReference type="Gene3D" id="1.10.8.60">
    <property type="match status" value="1"/>
</dbReference>
<dbReference type="Gene3D" id="1.10.8.10">
    <property type="entry name" value="DNA helicase RuvA subunit, C-terminal domain"/>
    <property type="match status" value="1"/>
</dbReference>
<dbReference type="Gene3D" id="3.40.50.300">
    <property type="entry name" value="P-loop containing nucleotide triphosphate hydrolases"/>
    <property type="match status" value="2"/>
</dbReference>
<dbReference type="HAMAP" id="MF_00249">
    <property type="entry name" value="HslU"/>
    <property type="match status" value="1"/>
</dbReference>
<dbReference type="InterPro" id="IPR003593">
    <property type="entry name" value="AAA+_ATPase"/>
</dbReference>
<dbReference type="InterPro" id="IPR050052">
    <property type="entry name" value="ATP-dep_Clp_protease_ClpX"/>
</dbReference>
<dbReference type="InterPro" id="IPR003959">
    <property type="entry name" value="ATPase_AAA_core"/>
</dbReference>
<dbReference type="InterPro" id="IPR019489">
    <property type="entry name" value="Clp_ATPase_C"/>
</dbReference>
<dbReference type="InterPro" id="IPR004491">
    <property type="entry name" value="HslU"/>
</dbReference>
<dbReference type="InterPro" id="IPR027417">
    <property type="entry name" value="P-loop_NTPase"/>
</dbReference>
<dbReference type="NCBIfam" id="TIGR00390">
    <property type="entry name" value="hslU"/>
    <property type="match status" value="1"/>
</dbReference>
<dbReference type="NCBIfam" id="NF003544">
    <property type="entry name" value="PRK05201.1"/>
    <property type="match status" value="1"/>
</dbReference>
<dbReference type="PANTHER" id="PTHR48102">
    <property type="entry name" value="ATP-DEPENDENT CLP PROTEASE ATP-BINDING SUBUNIT CLPX-LIKE, MITOCHONDRIAL-RELATED"/>
    <property type="match status" value="1"/>
</dbReference>
<dbReference type="PANTHER" id="PTHR48102:SF3">
    <property type="entry name" value="ATP-DEPENDENT PROTEASE ATPASE SUBUNIT HSLU"/>
    <property type="match status" value="1"/>
</dbReference>
<dbReference type="Pfam" id="PF00004">
    <property type="entry name" value="AAA"/>
    <property type="match status" value="1"/>
</dbReference>
<dbReference type="Pfam" id="PF07724">
    <property type="entry name" value="AAA_2"/>
    <property type="match status" value="1"/>
</dbReference>
<dbReference type="SMART" id="SM00382">
    <property type="entry name" value="AAA"/>
    <property type="match status" value="1"/>
</dbReference>
<dbReference type="SMART" id="SM01086">
    <property type="entry name" value="ClpB_D2-small"/>
    <property type="match status" value="1"/>
</dbReference>
<dbReference type="SUPFAM" id="SSF52540">
    <property type="entry name" value="P-loop containing nucleoside triphosphate hydrolases"/>
    <property type="match status" value="1"/>
</dbReference>
<accession>Q9Z617</accession>
<proteinExistence type="inferred from homology"/>
<organism>
    <name type="scientific">Buchnera aphidicola subsp. Schizaphis graminum (strain Sg)</name>
    <dbReference type="NCBI Taxonomy" id="198804"/>
    <lineage>
        <taxon>Bacteria</taxon>
        <taxon>Pseudomonadati</taxon>
        <taxon>Pseudomonadota</taxon>
        <taxon>Gammaproteobacteria</taxon>
        <taxon>Enterobacterales</taxon>
        <taxon>Erwiniaceae</taxon>
        <taxon>Buchnera</taxon>
    </lineage>
</organism>
<protein>
    <recommendedName>
        <fullName evidence="1">ATP-dependent protease ATPase subunit HslU</fullName>
    </recommendedName>
    <alternativeName>
        <fullName evidence="1">Unfoldase HslU</fullName>
    </alternativeName>
</protein>
<gene>
    <name evidence="1" type="primary">hslU</name>
    <name type="ordered locus">BUsg_558</name>
</gene>
<sequence length="443" mass="50030">MSEMTPPQIVSELNKFIIGQEQAKKAVAIALRNRWRRMQLNNELRHEITPKNILMIGPTGVGKTEIARRLAKLANSPFIKVEATKFTEVGYVGKEVDSIIRDLTDAAIKMIRVKNIEKNKLRVEEIVEERILDVLVPRPKNNWTENEKNESLLNTLQVFRKKLREGILDEKEIEINVLASTMGVEIMAPPGMEELTSQLQSLFQNLGGHKKNTRRLKIKDAVLLLKEEEAAKLINQEEIKKEAINAVEQNGIVFVDEIDKICKRRDSSGPDVSREGVQRDLLPLVEGCTVSTKYGMVKTDHILFIASGAFQTSTPSDLIPELQGRLPIKVELQPLTINDFEKILTEPTASITAQYKALMKTEGVCINFTKEGIRNIAEAAWKVNESMENIGARRLHTILEKLMEDISFNACDNVGKTIEINSEYVGKHLDQLISNEDLGRFIL</sequence>
<comment type="function">
    <text evidence="1">ATPase subunit of a proteasome-like degradation complex; this subunit has chaperone activity. The binding of ATP and its subsequent hydrolysis by HslU are essential for unfolding of protein substrates subsequently hydrolyzed by HslV. HslU recognizes the N-terminal part of its protein substrates and unfolds these before they are guided to HslV for hydrolysis.</text>
</comment>
<comment type="subunit">
    <text evidence="1">A double ring-shaped homohexamer of HslV is capped on each side by a ring-shaped HslU homohexamer. The assembly of the HslU/HslV complex is dependent on binding of ATP.</text>
</comment>
<comment type="subcellular location">
    <subcellularLocation>
        <location evidence="1">Cytoplasm</location>
    </subcellularLocation>
</comment>
<comment type="similarity">
    <text evidence="1">Belongs to the ClpX chaperone family. HslU subfamily.</text>
</comment>
<name>HSLU_BUCAP</name>
<feature type="chain" id="PRO_0000160487" description="ATP-dependent protease ATPase subunit HslU">
    <location>
        <begin position="1"/>
        <end position="443"/>
    </location>
</feature>
<feature type="binding site" evidence="1">
    <location>
        <position position="18"/>
    </location>
    <ligand>
        <name>ATP</name>
        <dbReference type="ChEBI" id="CHEBI:30616"/>
    </ligand>
</feature>
<feature type="binding site" evidence="1">
    <location>
        <begin position="60"/>
        <end position="65"/>
    </location>
    <ligand>
        <name>ATP</name>
        <dbReference type="ChEBI" id="CHEBI:30616"/>
    </ligand>
</feature>
<feature type="binding site" evidence="1">
    <location>
        <position position="256"/>
    </location>
    <ligand>
        <name>ATP</name>
        <dbReference type="ChEBI" id="CHEBI:30616"/>
    </ligand>
</feature>
<feature type="binding site" evidence="1">
    <location>
        <position position="321"/>
    </location>
    <ligand>
        <name>ATP</name>
        <dbReference type="ChEBI" id="CHEBI:30616"/>
    </ligand>
</feature>
<feature type="binding site" evidence="1">
    <location>
        <position position="393"/>
    </location>
    <ligand>
        <name>ATP</name>
        <dbReference type="ChEBI" id="CHEBI:30616"/>
    </ligand>
</feature>